<organismHost>
    <name type="scientific">Homo sapiens</name>
    <name type="common">Human</name>
    <dbReference type="NCBI Taxonomy" id="9606"/>
</organismHost>
<organismHost>
    <name type="scientific">Rattus norvegicus</name>
    <name type="common">Rat</name>
    <dbReference type="NCBI Taxonomy" id="10116"/>
</organismHost>
<organismHost>
    <name type="scientific">Rattus rattus</name>
    <name type="common">Black rat</name>
    <dbReference type="NCBI Taxonomy" id="10117"/>
</organismHost>
<accession>P17880</accession>
<feature type="signal peptide" evidence="9">
    <location>
        <begin position="1"/>
        <end position="16"/>
    </location>
</feature>
<feature type="chain" id="PRO_0000036841" description="Envelopment polyprotein">
    <location>
        <begin position="17"/>
        <end position="1133"/>
    </location>
</feature>
<feature type="chain" id="PRO_0000036842" description="Glycoprotein N" evidence="1">
    <location>
        <begin position="17"/>
        <end position="646"/>
    </location>
</feature>
<feature type="chain" id="PRO_0000036843" description="Glycoprotein C" evidence="1">
    <location>
        <begin position="647"/>
        <end position="1133"/>
    </location>
</feature>
<feature type="topological domain" description="Lumenal" evidence="7">
    <location>
        <begin position="17"/>
        <end position="484"/>
    </location>
</feature>
<feature type="transmembrane region" description="Helical" evidence="7">
    <location>
        <begin position="485"/>
        <end position="504"/>
    </location>
</feature>
<feature type="topological domain" description="Cytoplasmic" evidence="7">
    <location>
        <begin position="505"/>
        <end position="626"/>
    </location>
</feature>
<feature type="transmembrane region" description="Helical" evidence="7">
    <location>
        <begin position="627"/>
        <end position="647"/>
    </location>
</feature>
<feature type="topological domain" description="Lumenal" evidence="7">
    <location>
        <begin position="648"/>
        <end position="1105"/>
    </location>
</feature>
<feature type="transmembrane region" description="Helical" evidence="7">
    <location>
        <begin position="1106"/>
        <end position="1125"/>
    </location>
</feature>
<feature type="topological domain" description="Cytoplasmic" evidence="7">
    <location>
        <begin position="1126"/>
        <end position="1133"/>
    </location>
</feature>
<feature type="domain" description="ITAM" evidence="8">
    <location>
        <begin position="609"/>
        <end position="632"/>
    </location>
</feature>
<feature type="zinc finger region" description="CCHC-type 1" evidence="6">
    <location>
        <begin position="543"/>
        <end position="563"/>
    </location>
</feature>
<feature type="zinc finger region" description="CCHC-type 2" evidence="6">
    <location>
        <begin position="568"/>
        <end position="589"/>
    </location>
</feature>
<feature type="region of interest" description="Binding to the ribonucleoprotein" evidence="6">
    <location>
        <begin position="514"/>
        <end position="531"/>
    </location>
</feature>
<feature type="region of interest" description="Binding to the ribonucleoprotein" evidence="4">
    <location>
        <begin position="586"/>
        <end position="603"/>
    </location>
</feature>
<feature type="region of interest" description="Binding to the ribonucleoprotein" evidence="6">
    <location>
        <begin position="590"/>
        <end position="601"/>
    </location>
</feature>
<feature type="region of interest" description="Binding to the ribonucleoprotein" evidence="4">
    <location>
        <begin position="609"/>
        <end position="623"/>
    </location>
</feature>
<feature type="region of interest" description="Fusion loop" evidence="5">
    <location>
        <begin position="755"/>
        <end position="775"/>
    </location>
</feature>
<feature type="region of interest" description="Binding to the ribonucleoprotein" evidence="4">
    <location>
        <begin position="1120"/>
        <end position="1133"/>
    </location>
</feature>
<feature type="short sequence motif" description="YxxL" evidence="2">
    <location>
        <begin position="613"/>
        <end position="616"/>
    </location>
</feature>
<feature type="site" description="Cleavage; by host signal peptidase" evidence="2">
    <location>
        <begin position="646"/>
        <end position="647"/>
    </location>
</feature>
<feature type="glycosylation site" description="N-linked (GlcNAc...) asparagine; by host" evidence="7">
    <location>
        <position position="132"/>
    </location>
</feature>
<feature type="glycosylation site" description="N-linked (GlcNAc...) asparagine; by host" evidence="7">
    <location>
        <position position="233"/>
    </location>
</feature>
<feature type="glycosylation site" description="N-linked (GlcNAc...) asparagine; by host" evidence="7">
    <location>
        <position position="345"/>
    </location>
</feature>
<feature type="glycosylation site" description="N-linked (GlcNAc...) asparagine; by host" evidence="7">
    <location>
        <position position="397"/>
    </location>
</feature>
<feature type="glycosylation site" description="N-linked (GlcNAc...) asparagine; by host" evidence="2">
    <location>
        <position position="926"/>
    </location>
</feature>
<feature type="disulfide bond" evidence="6">
    <location>
        <begin position="61"/>
        <end position="155"/>
    </location>
</feature>
<feature type="disulfide bond" evidence="6">
    <location>
        <begin position="107"/>
        <end position="126"/>
    </location>
</feature>
<feature type="disulfide bond" evidence="6">
    <location>
        <begin position="131"/>
        <end position="136"/>
    </location>
</feature>
<feature type="disulfide bond" evidence="6">
    <location>
        <begin position="173"/>
        <end position="183"/>
    </location>
</feature>
<feature type="disulfide bond" evidence="6">
    <location>
        <begin position="208"/>
        <end position="245"/>
    </location>
</feature>
<feature type="disulfide bond" evidence="6">
    <location>
        <begin position="232"/>
        <end position="349"/>
    </location>
</feature>
<feature type="disulfide bond" evidence="6">
    <location>
        <begin position="374"/>
        <end position="433"/>
    </location>
</feature>
<feature type="disulfide bond" evidence="6">
    <location>
        <begin position="378"/>
        <end position="387"/>
    </location>
</feature>
<feature type="disulfide bond" evidence="6">
    <location>
        <begin position="403"/>
        <end position="422"/>
    </location>
</feature>
<feature type="disulfide bond" evidence="6">
    <location>
        <begin position="450"/>
        <end position="473"/>
    </location>
</feature>
<feature type="disulfide bond" evidence="2">
    <location>
        <begin position="733"/>
        <end position="768"/>
    </location>
</feature>
<feature type="disulfide bond" evidence="2">
    <location>
        <begin position="737"/>
        <end position="775"/>
    </location>
</feature>
<feature type="disulfide bond" evidence="2">
    <location>
        <begin position="749"/>
        <end position="883"/>
    </location>
</feature>
<feature type="disulfide bond" evidence="2">
    <location>
        <begin position="763"/>
        <end position="894"/>
    </location>
</feature>
<feature type="disulfide bond" evidence="2">
    <location>
        <begin position="778"/>
        <end position="902"/>
    </location>
</feature>
<feature type="disulfide bond" evidence="2">
    <location>
        <begin position="804"/>
        <end position="813"/>
    </location>
</feature>
<feature type="disulfide bond" evidence="2">
    <location>
        <begin position="821"/>
        <end position="830"/>
    </location>
</feature>
<feature type="disulfide bond" evidence="2">
    <location>
        <begin position="861"/>
        <end position="865"/>
    </location>
</feature>
<feature type="disulfide bond" evidence="2">
    <location>
        <begin position="968"/>
        <end position="998"/>
    </location>
</feature>
<feature type="disulfide bond" evidence="2">
    <location>
        <begin position="991"/>
        <end position="1043"/>
    </location>
</feature>
<feature type="disulfide bond" evidence="2">
    <location>
        <begin position="1008"/>
        <end position="1013"/>
    </location>
</feature>
<feature type="disulfide bond" evidence="2">
    <location>
        <begin position="1044"/>
        <end position="1049"/>
    </location>
</feature>
<feature type="disulfide bond" evidence="6">
    <location>
        <begin position="1083"/>
        <end position="1087"/>
    </location>
</feature>
<name>GP_SEOUS</name>
<sequence>MWSLLLLAALVGQGFALKNVFDMRIQLPHSVNFGETSVSGYTEFPPLSLQEAEQLVPESSCNMDNHQSLSTINKLTKVIWRKKANQESANQNSFEVVESEVSFKGLCMLKHRMVEESYRNRRSVICYDLACNSTFCKPTVYMIVPIHACNMMKSCLIGLGPYRIQVVYERTYCTTGILTEGKCFVPDKAVVSALKRGMYAIASIETICFFIHQKGNTYKIVTAITSAMGSKCNNTDTKVQGYYICIIGGNSAPVYAPAGEDFRAMEVFSGIITSPHGEDHDLPGEEIATYQISGQIEAKIPHTVSSKNLKLTAFAGIPSYSSTSILAASEDGRFIFSPGLFPNLNQSVCDNNALPLIWRGLIDLTGYYEAVHPCNVFCVLSGPGASCEAFSEGGIFNITSPMCLVSKQNRFRAAEQQISFVCQRVDMDIIVYCNGQKKTILTKTLVIGQCIYTITSLFSLLPGVAHSIAIELCVPGFHGWATAALLITFCFGWVLIPACTLAILLVLKFFANILHTSNQENRFKAILRKIKEEFEKTKGSMVCEICKYECETLKELKAHNLSCVQGECPYCFTHCEPTETAIQAHYKVCQATHRFREDLKKTVTPQNIGPGCYRTLNLFRYKSRCYILTMWTLLLIIESILWAASAAEIPLVPLWTDNAHGVGSVPMHTDLELDFSLPSSSKYTYKRHLTNPVNDQQSVSLHIEIESQGIGAAVHHLGHWYDARLNLKTSFHCYGACTKYQYPWHTAKCHFEKDYEYENSWACNPPDCPGVGTGCTACGLYLDQLKPVGTAFKIISVRYSRKVCVQFGEEHLCKTIDMNDCFVTRHAKICIIGTVSKFSQGDTLLFLGPMEGGGIIFKHWCTSTCHFGDPGDVMGPKDKPFICPEFPGQFRKKCNFATTPVCEYDGNIISGYKKVLATIDSFQSFNTSNIHFTDERIEWRDPDGMLRDHINIVISKDIDFENLAENPCKVGLQAANIEGAWGSGVGFTLTCKVSLTECPTFLTSIKACDMAICYGAESVTLSRGQNTVKITGKGGHSGSSFKCCHGKECSSTGLQASAPHLDKVNGISELENEKVYDDGAPECGITCWFKKSGEWVMGIINGNWVVLIVLCVLLLFSLILLSILCPVRKHKKS</sequence>
<dbReference type="EMBL" id="M34882">
    <property type="protein sequence ID" value="AAA47825.1"/>
    <property type="molecule type" value="Genomic_RNA"/>
</dbReference>
<dbReference type="SMR" id="P17880"/>
<dbReference type="GlyCosmos" id="P17880">
    <property type="glycosylation" value="5 sites, No reported glycans"/>
</dbReference>
<dbReference type="GO" id="GO:0044167">
    <property type="term" value="C:host cell endoplasmic reticulum membrane"/>
    <property type="evidence" value="ECO:0007669"/>
    <property type="project" value="UniProtKB-SubCell"/>
</dbReference>
<dbReference type="GO" id="GO:0044178">
    <property type="term" value="C:host cell Golgi membrane"/>
    <property type="evidence" value="ECO:0007669"/>
    <property type="project" value="UniProtKB-SubCell"/>
</dbReference>
<dbReference type="GO" id="GO:0033650">
    <property type="term" value="C:host cell mitochondrion"/>
    <property type="evidence" value="ECO:0007669"/>
    <property type="project" value="UniProtKB-SubCell"/>
</dbReference>
<dbReference type="GO" id="GO:0044228">
    <property type="term" value="C:host cell surface"/>
    <property type="evidence" value="ECO:0007669"/>
    <property type="project" value="UniProtKB-SubCell"/>
</dbReference>
<dbReference type="GO" id="GO:0016020">
    <property type="term" value="C:membrane"/>
    <property type="evidence" value="ECO:0007669"/>
    <property type="project" value="UniProtKB-KW"/>
</dbReference>
<dbReference type="GO" id="GO:0055036">
    <property type="term" value="C:virion membrane"/>
    <property type="evidence" value="ECO:0007669"/>
    <property type="project" value="UniProtKB-SubCell"/>
</dbReference>
<dbReference type="GO" id="GO:0008270">
    <property type="term" value="F:zinc ion binding"/>
    <property type="evidence" value="ECO:0007669"/>
    <property type="project" value="UniProtKB-KW"/>
</dbReference>
<dbReference type="GO" id="GO:0039654">
    <property type="term" value="P:fusion of virus membrane with host endosome membrane"/>
    <property type="evidence" value="ECO:0007669"/>
    <property type="project" value="UniProtKB-KW"/>
</dbReference>
<dbReference type="GO" id="GO:0007165">
    <property type="term" value="P:signal transduction"/>
    <property type="evidence" value="ECO:0007669"/>
    <property type="project" value="InterPro"/>
</dbReference>
<dbReference type="GO" id="GO:0046718">
    <property type="term" value="P:symbiont entry into host cell"/>
    <property type="evidence" value="ECO:0007669"/>
    <property type="project" value="UniProtKB-KW"/>
</dbReference>
<dbReference type="GO" id="GO:0052170">
    <property type="term" value="P:symbiont-mediated suppression of host innate immune response"/>
    <property type="evidence" value="ECO:0007669"/>
    <property type="project" value="UniProtKB-KW"/>
</dbReference>
<dbReference type="GO" id="GO:0039527">
    <property type="term" value="P:symbiont-mediated suppression of host TRAF-mediated signal transduction"/>
    <property type="evidence" value="ECO:0007669"/>
    <property type="project" value="UniProtKB-KW"/>
</dbReference>
<dbReference type="GO" id="GO:0019062">
    <property type="term" value="P:virion attachment to host cell"/>
    <property type="evidence" value="ECO:0007669"/>
    <property type="project" value="UniProtKB-KW"/>
</dbReference>
<dbReference type="Gene3D" id="1.10.8.1320">
    <property type="match status" value="1"/>
</dbReference>
<dbReference type="InterPro" id="IPR016402">
    <property type="entry name" value="Envelope_glycoprot_Hantavirus"/>
</dbReference>
<dbReference type="InterPro" id="IPR048791">
    <property type="entry name" value="Gc_C_bunya"/>
</dbReference>
<dbReference type="InterPro" id="IPR048790">
    <property type="entry name" value="Gn-B_hanta"/>
</dbReference>
<dbReference type="InterPro" id="IPR002532">
    <property type="entry name" value="Hanta_Gc_N"/>
</dbReference>
<dbReference type="InterPro" id="IPR002534">
    <property type="entry name" value="Hanta_Gn-H"/>
</dbReference>
<dbReference type="InterPro" id="IPR012316">
    <property type="entry name" value="ITAM_motif_hantavir-typ"/>
</dbReference>
<dbReference type="Pfam" id="PF20682">
    <property type="entry name" value="Hanta_Gc_C"/>
    <property type="match status" value="1"/>
</dbReference>
<dbReference type="Pfam" id="PF01561">
    <property type="entry name" value="Hanta_Gc_N"/>
    <property type="match status" value="1"/>
</dbReference>
<dbReference type="Pfam" id="PF20679">
    <property type="entry name" value="Hanta_Gn-B"/>
    <property type="match status" value="1"/>
</dbReference>
<dbReference type="Pfam" id="PF01567">
    <property type="entry name" value="Hanta_Gn-H"/>
    <property type="match status" value="1"/>
</dbReference>
<dbReference type="Pfam" id="PF10538">
    <property type="entry name" value="ITAM_Cys-rich"/>
    <property type="match status" value="1"/>
</dbReference>
<dbReference type="PIRSF" id="PIRSF003945">
    <property type="entry name" value="M_poly_HantaV"/>
    <property type="match status" value="1"/>
</dbReference>
<dbReference type="PROSITE" id="PS51056">
    <property type="entry name" value="ITAM_2"/>
    <property type="match status" value="1"/>
</dbReference>
<proteinExistence type="evidence at protein level"/>
<protein>
    <recommendedName>
        <fullName>Envelopment polyprotein</fullName>
    </recommendedName>
    <alternativeName>
        <fullName>M polyprotein</fullName>
    </alternativeName>
    <component>
        <recommendedName>
            <fullName evidence="2">Glycoprotein N</fullName>
            <shortName>Gn</shortName>
        </recommendedName>
        <alternativeName>
            <fullName>Glycoprotein G1</fullName>
        </alternativeName>
    </component>
    <component>
        <recommendedName>
            <fullName evidence="2">Glycoprotein C</fullName>
            <shortName>Gc</shortName>
        </recommendedName>
        <alternativeName>
            <fullName>Glycoprotein G2</fullName>
        </alternativeName>
    </component>
</protein>
<gene>
    <name type="primary">GP</name>
</gene>
<reference key="1">
    <citation type="journal article" date="1990" name="Virology">
        <title>Coding properties of the S and the M genome segments of Sapporo rat virus: comparison to other causative agents of hemorrhagic fever with renal syndrome.</title>
        <authorList>
            <person name="Arikawa J."/>
            <person name="Lapenotiere H.F."/>
            <person name="Iacono-Connors L."/>
            <person name="Wang M."/>
            <person name="Schmaljohn C.S."/>
        </authorList>
    </citation>
    <scope>NUCLEOTIDE SEQUENCE [GENOMIC RNA]</scope>
    <scope>PROTEIN SEQUENCE OF 17-23 AND 647-654</scope>
</reference>
<reference key="2">
    <citation type="journal article" date="2014" name="Viruses">
        <title>Hantavirus Gn and Gc envelope glycoproteins: key structural units for virus cell entry and virus assembly.</title>
        <authorList>
            <person name="Cifuentes-Munoz N."/>
            <person name="Salazar-Quiroz N."/>
            <person name="Tischler N.D."/>
        </authorList>
    </citation>
    <scope>REVIEW</scope>
</reference>
<evidence type="ECO:0000250" key="1"/>
<evidence type="ECO:0000250" key="2">
    <source>
        <dbReference type="UniProtKB" id="P08668"/>
    </source>
</evidence>
<evidence type="ECO:0000250" key="3">
    <source>
        <dbReference type="UniProtKB" id="P0DTJ1"/>
    </source>
</evidence>
<evidence type="ECO:0000250" key="4">
    <source>
        <dbReference type="UniProtKB" id="P27312"/>
    </source>
</evidence>
<evidence type="ECO:0000250" key="5">
    <source>
        <dbReference type="UniProtKB" id="P41266"/>
    </source>
</evidence>
<evidence type="ECO:0000250" key="6">
    <source>
        <dbReference type="UniProtKB" id="Q9E006"/>
    </source>
</evidence>
<evidence type="ECO:0000255" key="7"/>
<evidence type="ECO:0000255" key="8">
    <source>
        <dbReference type="PROSITE-ProRule" id="PRU00379"/>
    </source>
</evidence>
<evidence type="ECO:0000269" key="9">
    <source>
    </source>
</evidence>
<evidence type="ECO:0000305" key="10"/>
<comment type="function">
    <molecule>Glycoprotein N</molecule>
    <text evidence="2 4">Forms homotetramers with glycoprotein C at the surface of the virion (By similarity). Attaches the virion to host cell receptors including integrin ITGAV/ITGB3 (By similarity). This attachment induces virion internalization predominantly through clathrin-dependent endocytosis (By similarity). Mediates the assembly and budding of infectious virus particles through its interaction with the nucleocapsid protein and the viral genome (By similarity). May dysregulate normal immune and endothelial cell responses through an ITAM motif (By similarity). Translocates to mitochondria, binds to host TUFM and recruits MAP1LC3B (By similarity). These interactions induce mitochondrial autophagy and therefore destruction of host MAVS leading to inhibition of type I interferon (IFN) responses (By similarity). Concomitant breakdown of glycoprotein N is apparently prevented by the nucleoprotein that may inhibit Gn-stimulated autophagosome-lysosome fusion (By similarity). Interacts with the viral genomic RNA (By similarity).</text>
</comment>
<comment type="function">
    <molecule>Glycoprotein C</molecule>
    <text evidence="2">Forms homotetramers with glycoprotein N at the surface of the virion. Attaches the virion to host cell receptors including integrin ITGAV/ITGB3. This attachment induces virion internalization predominantly through clathrin-dependent endocytosis. Class II fusion protein that promotes fusion of viral membrane with host endosomal membrane after endocytosis of the virion.</text>
</comment>
<comment type="subunit">
    <molecule>Glycoprotein N</molecule>
    <text evidence="2 3">Homodimer (By similarity). Homotetramer; forms heterotetrameric Gn-Gc spikes in the pre-fusion conformation (By similarity). Interacts (via C-terminus) with the nucleoprotein (By similarity). Interacts with host TUFM; this interaction contributes to the virus-induced degradation of mitochondria by autophagy, which leads to degradation of host MAVS and inhibition of type I interferon (IFN) responses (By similarity). Interacts with host MAP1LC3B; this interaction contributes to the virus-induced degradation of mitochondria by autophagy, which leads to degradation of host MAVS and inhibition of type I interferon (IFN) responses (By similarity).</text>
</comment>
<comment type="subunit">
    <molecule>Glycoprotein C</molecule>
    <text evidence="2 4">Homodimer. Homotetramer; forms heterotetrameric Gn-Gc spikes in the pre-fusion conformation. Homotrimer; forms homotrimer in the post-fusion conformation at acidic pH (By similarity). Interacts (via C-terminus) with the nucleoprotein (By similarity).</text>
</comment>
<comment type="subcellular location">
    <molecule>Glycoprotein N</molecule>
    <subcellularLocation>
        <location evidence="2">Virion membrane</location>
        <topology>Multi-pass membrane protein</topology>
    </subcellularLocation>
    <subcellularLocation>
        <location evidence="2">Host cell surface</location>
    </subcellularLocation>
    <subcellularLocation>
        <location evidence="2">Host Golgi apparatus membrane</location>
        <topology evidence="2">Multi-pass membrane protein</topology>
    </subcellularLocation>
    <subcellularLocation>
        <location evidence="2">Host endoplasmic reticulum membrane</location>
        <topology evidence="2">Multi-pass membrane protein</topology>
    </subcellularLocation>
    <subcellularLocation>
        <location evidence="2">Host mitochondrion</location>
    </subcellularLocation>
    <text evidence="4">Interaction between glycoprotein N and glycoprotein C is essential for proper targeting of glycoprotein N to the host Golgi complex, where virion budding occurs.</text>
</comment>
<comment type="subcellular location">
    <molecule>Glycoprotein C</molecule>
    <subcellularLocation>
        <location evidence="2">Virion membrane</location>
        <topology>Single-pass type I membrane protein</topology>
    </subcellularLocation>
    <subcellularLocation>
        <location evidence="2">Host cell surface</location>
    </subcellularLocation>
    <subcellularLocation>
        <location evidence="2">Host Golgi apparatus membrane</location>
        <topology evidence="2">Single-pass type I membrane protein</topology>
    </subcellularLocation>
    <subcellularLocation>
        <location evidence="2">Host endoplasmic reticulum membrane</location>
        <topology evidence="2">Single-pass type I membrane protein</topology>
    </subcellularLocation>
    <text evidence="2 10">Budding probably takes place at the host Golgi (Probable). Glycoprotein C cytoplasmic tail is important for efficient Golgi localization (By similarity).</text>
</comment>
<comment type="domain">
    <molecule>Glycoprotein N</molecule>
    <text evidence="2 3 4 6">The YxxL motif at the C-terminus is indispensable for the interaction with MAP1LC3B and for the Gn-mediated induction of mitochondrial autophagy (By similarity). The cytoplasmic tail is involved in the inhibition of the host innate immune response (By similarity). The C-terminus of the cytoplasmic tail is involved in binding to the viral genome and the nucleocapsid (By similarity). Contains 2 contiguous zinc-fingers (By similarity).</text>
</comment>
<comment type="domain">
    <molecule>Glycoprotein C</molecule>
    <text evidence="4">The C-terminus is necessary for proper localization in the Golgi (By similarity). The cytoplasmic tail is involved in binding to the nucleocapsid (By similarity).</text>
</comment>
<comment type="PTM">
    <molecule>Envelopment polyprotein</molecule>
    <text evidence="2">Envelope polyprotein precursor is quickly cleaved in vivo just after synthesis, presumably by host signal peptidase.</text>
</comment>
<comment type="similarity">
    <text evidence="10">Belongs to the hantavirus envelope glycoprotein family.</text>
</comment>
<organism>
    <name type="scientific">Seoul virus (strain SR-11)</name>
    <name type="common">Sapporo rat virus</name>
    <dbReference type="NCBI Taxonomy" id="11610"/>
    <lineage>
        <taxon>Viruses</taxon>
        <taxon>Riboviria</taxon>
        <taxon>Orthornavirae</taxon>
        <taxon>Negarnaviricota</taxon>
        <taxon>Polyploviricotina</taxon>
        <taxon>Ellioviricetes</taxon>
        <taxon>Bunyavirales</taxon>
        <taxon>Hantaviridae</taxon>
        <taxon>Mammantavirinae</taxon>
        <taxon>Orthohantavirus</taxon>
        <taxon>Orthohantavirus seoulense</taxon>
    </lineage>
</organism>
<keyword id="KW-0903">Direct protein sequencing</keyword>
<keyword id="KW-1015">Disulfide bond</keyword>
<keyword id="KW-1170">Fusion of virus membrane with host endosomal membrane</keyword>
<keyword id="KW-1168">Fusion of virus membrane with host membrane</keyword>
<keyword id="KW-0325">Glycoprotein</keyword>
<keyword id="KW-1038">Host endoplasmic reticulum</keyword>
<keyword id="KW-1040">Host Golgi apparatus</keyword>
<keyword id="KW-1043">Host membrane</keyword>
<keyword id="KW-1045">Host mitochondrion</keyword>
<keyword id="KW-0945">Host-virus interaction</keyword>
<keyword id="KW-1090">Inhibition of host innate immune response by virus</keyword>
<keyword id="KW-1113">Inhibition of host RLR pathway by virus</keyword>
<keyword id="KW-1110">Inhibition of host TRAFs by virus</keyword>
<keyword id="KW-0472">Membrane</keyword>
<keyword id="KW-0479">Metal-binding</keyword>
<keyword id="KW-0597">Phosphoprotein</keyword>
<keyword id="KW-0677">Repeat</keyword>
<keyword id="KW-0732">Signal</keyword>
<keyword id="KW-0812">Transmembrane</keyword>
<keyword id="KW-1133">Transmembrane helix</keyword>
<keyword id="KW-1161">Viral attachment to host cell</keyword>
<keyword id="KW-0899">Viral immunoevasion</keyword>
<keyword id="KW-1162">Viral penetration into host cytoplasm</keyword>
<keyword id="KW-0946">Virion</keyword>
<keyword id="KW-1160">Virus entry into host cell</keyword>
<keyword id="KW-0862">Zinc</keyword>
<keyword id="KW-0863">Zinc-finger</keyword>